<comment type="cofactor">
    <cofactor evidence="1">
        <name>Zn(2+)</name>
        <dbReference type="ChEBI" id="CHEBI:29105"/>
    </cofactor>
    <text evidence="1">Binds 1 zinc ion per subunit.</text>
</comment>
<comment type="subcellular location">
    <subcellularLocation>
        <location evidence="1">Cell membrane</location>
        <topology evidence="1">Multi-pass membrane protein</topology>
    </subcellularLocation>
</comment>
<comment type="similarity">
    <text evidence="1">Belongs to the peptidase M48B family.</text>
</comment>
<gene>
    <name evidence="1" type="primary">htpX</name>
    <name type="ordered locus">BL0551</name>
</gene>
<organism>
    <name type="scientific">Bifidobacterium longum (strain NCC 2705)</name>
    <dbReference type="NCBI Taxonomy" id="206672"/>
    <lineage>
        <taxon>Bacteria</taxon>
        <taxon>Bacillati</taxon>
        <taxon>Actinomycetota</taxon>
        <taxon>Actinomycetes</taxon>
        <taxon>Bifidobacteriales</taxon>
        <taxon>Bifidobacteriaceae</taxon>
        <taxon>Bifidobacterium</taxon>
    </lineage>
</organism>
<reference key="1">
    <citation type="journal article" date="2002" name="Proc. Natl. Acad. Sci. U.S.A.">
        <title>The genome sequence of Bifidobacterium longum reflects its adaptation to the human gastrointestinal tract.</title>
        <authorList>
            <person name="Schell M.A."/>
            <person name="Karmirantzou M."/>
            <person name="Snel B."/>
            <person name="Vilanova D."/>
            <person name="Berger B."/>
            <person name="Pessi G."/>
            <person name="Zwahlen M.-C."/>
            <person name="Desiere F."/>
            <person name="Bork P."/>
            <person name="Delley M."/>
            <person name="Pridmore R.D."/>
            <person name="Arigoni F."/>
        </authorList>
    </citation>
    <scope>NUCLEOTIDE SEQUENCE [LARGE SCALE GENOMIC DNA]</scope>
    <source>
        <strain>NCC 2705</strain>
    </source>
</reference>
<evidence type="ECO:0000255" key="1">
    <source>
        <dbReference type="HAMAP-Rule" id="MF_00188"/>
    </source>
</evidence>
<feature type="chain" id="PRO_0000138853" description="Protease HtpX homolog">
    <location>
        <begin position="1"/>
        <end position="306"/>
    </location>
</feature>
<feature type="transmembrane region" description="Helical" evidence="1">
    <location>
        <begin position="10"/>
        <end position="30"/>
    </location>
</feature>
<feature type="transmembrane region" description="Helical" evidence="1">
    <location>
        <begin position="33"/>
        <end position="53"/>
    </location>
</feature>
<feature type="transmembrane region" description="Helical" evidence="1">
    <location>
        <begin position="149"/>
        <end position="169"/>
    </location>
</feature>
<feature type="transmembrane region" description="Helical" evidence="1">
    <location>
        <begin position="181"/>
        <end position="201"/>
    </location>
</feature>
<feature type="active site" evidence="1">
    <location>
        <position position="136"/>
    </location>
</feature>
<feature type="binding site" evidence="1">
    <location>
        <position position="135"/>
    </location>
    <ligand>
        <name>Zn(2+)</name>
        <dbReference type="ChEBI" id="CHEBI:29105"/>
        <note>catalytic</note>
    </ligand>
</feature>
<feature type="binding site" evidence="1">
    <location>
        <position position="139"/>
    </location>
    <ligand>
        <name>Zn(2+)</name>
        <dbReference type="ChEBI" id="CHEBI:29105"/>
        <note>catalytic</note>
    </ligand>
</feature>
<feature type="binding site" evidence="1">
    <location>
        <position position="210"/>
    </location>
    <ligand>
        <name>Zn(2+)</name>
        <dbReference type="ChEBI" id="CHEBI:29105"/>
        <note>catalytic</note>
    </ligand>
</feature>
<dbReference type="EC" id="3.4.24.-" evidence="1"/>
<dbReference type="EMBL" id="AE014295">
    <property type="protein sequence ID" value="AAN24375.1"/>
    <property type="molecule type" value="Genomic_DNA"/>
</dbReference>
<dbReference type="RefSeq" id="NP_695739.1">
    <property type="nucleotide sequence ID" value="NC_004307.2"/>
</dbReference>
<dbReference type="SMR" id="Q8G6T7"/>
<dbReference type="STRING" id="206672.BL0551"/>
<dbReference type="EnsemblBacteria" id="AAN24375">
    <property type="protein sequence ID" value="AAN24375"/>
    <property type="gene ID" value="BL0551"/>
</dbReference>
<dbReference type="KEGG" id="blo:BL0551"/>
<dbReference type="PATRIC" id="fig|206672.9.peg.1295"/>
<dbReference type="HOGENOM" id="CLU_042266_3_1_11"/>
<dbReference type="OrthoDB" id="15218at2"/>
<dbReference type="PhylomeDB" id="Q8G6T7"/>
<dbReference type="Proteomes" id="UP000000439">
    <property type="component" value="Chromosome"/>
</dbReference>
<dbReference type="GO" id="GO:0005886">
    <property type="term" value="C:plasma membrane"/>
    <property type="evidence" value="ECO:0007669"/>
    <property type="project" value="UniProtKB-SubCell"/>
</dbReference>
<dbReference type="GO" id="GO:0004222">
    <property type="term" value="F:metalloendopeptidase activity"/>
    <property type="evidence" value="ECO:0007669"/>
    <property type="project" value="UniProtKB-UniRule"/>
</dbReference>
<dbReference type="GO" id="GO:0008270">
    <property type="term" value="F:zinc ion binding"/>
    <property type="evidence" value="ECO:0007669"/>
    <property type="project" value="UniProtKB-UniRule"/>
</dbReference>
<dbReference type="GO" id="GO:0006508">
    <property type="term" value="P:proteolysis"/>
    <property type="evidence" value="ECO:0007669"/>
    <property type="project" value="UniProtKB-KW"/>
</dbReference>
<dbReference type="CDD" id="cd07336">
    <property type="entry name" value="M48B_HtpX_like"/>
    <property type="match status" value="1"/>
</dbReference>
<dbReference type="Gene3D" id="3.30.2010.10">
    <property type="entry name" value="Metalloproteases ('zincins'), catalytic domain"/>
    <property type="match status" value="1"/>
</dbReference>
<dbReference type="HAMAP" id="MF_00188">
    <property type="entry name" value="Pept_M48_protease_HtpX"/>
    <property type="match status" value="1"/>
</dbReference>
<dbReference type="InterPro" id="IPR050083">
    <property type="entry name" value="HtpX_protease"/>
</dbReference>
<dbReference type="InterPro" id="IPR022919">
    <property type="entry name" value="Pept_M48_protease_HtpX"/>
</dbReference>
<dbReference type="InterPro" id="IPR001915">
    <property type="entry name" value="Peptidase_M48"/>
</dbReference>
<dbReference type="NCBIfam" id="NF002839">
    <property type="entry name" value="PRK03072.1"/>
    <property type="match status" value="1"/>
</dbReference>
<dbReference type="PANTHER" id="PTHR43221">
    <property type="entry name" value="PROTEASE HTPX"/>
    <property type="match status" value="1"/>
</dbReference>
<dbReference type="PANTHER" id="PTHR43221:SF1">
    <property type="entry name" value="PROTEASE HTPX"/>
    <property type="match status" value="1"/>
</dbReference>
<dbReference type="Pfam" id="PF01435">
    <property type="entry name" value="Peptidase_M48"/>
    <property type="match status" value="1"/>
</dbReference>
<dbReference type="PROSITE" id="PS00142">
    <property type="entry name" value="ZINC_PROTEASE"/>
    <property type="match status" value="1"/>
</dbReference>
<sequence>MHGHFNGLKTTLLFALMWAIIMLIWWATGGSRQTLSIYIVIGLITTFGTYWFSDKLAIASMGAREVSEQEAPEIYQIVRELSAKAGKPMPRIYIAPTMSPNAFATGRNERHAAVCCTQGILQILNARELRGVLGHELMHVYNHDILTSAIASAMATVISYLGYSLMYFGGGSRDDRDSSGGLGLIGALLSVILAPIAASLIQMAISRTREYDADEDGSLLTGDPEALASALNKISYGAQTTPMRKTAGTQSVSAMMIANPFSAVGFSRLFSTHPPTDERIARLMQMANEMNGTPIAPPTYSTRVGR</sequence>
<proteinExistence type="inferred from homology"/>
<accession>Q8G6T7</accession>
<protein>
    <recommendedName>
        <fullName evidence="1">Protease HtpX homolog</fullName>
        <ecNumber evidence="1">3.4.24.-</ecNumber>
    </recommendedName>
</protein>
<name>HTPX_BIFLO</name>
<keyword id="KW-1003">Cell membrane</keyword>
<keyword id="KW-0378">Hydrolase</keyword>
<keyword id="KW-0472">Membrane</keyword>
<keyword id="KW-0479">Metal-binding</keyword>
<keyword id="KW-0482">Metalloprotease</keyword>
<keyword id="KW-0645">Protease</keyword>
<keyword id="KW-1185">Reference proteome</keyword>
<keyword id="KW-0812">Transmembrane</keyword>
<keyword id="KW-1133">Transmembrane helix</keyword>
<keyword id="KW-0862">Zinc</keyword>